<accession>Q04766</accession>
<name>VSP1_BPMV4</name>
<organism>
    <name type="scientific">Lactococcus phage mv4</name>
    <name type="common">Lactococcus delbrueckii bacteriophage mv4</name>
    <dbReference type="NCBI Taxonomy" id="12392"/>
    <lineage>
        <taxon>Viruses</taxon>
    </lineage>
</organism>
<keyword id="KW-0946">Virion</keyword>
<organismHost>
    <name type="scientific">Lactobacillus delbrueckii</name>
    <dbReference type="NCBI Taxonomy" id="1584"/>
</organismHost>
<evidence type="ECO:0000305" key="1"/>
<comment type="subcellular location">
    <subcellularLocation>
        <location evidence="1">Virion</location>
    </subcellularLocation>
</comment>
<comment type="similarity">
    <text evidence="1">Belongs to the Lactobacillus delbrueckii bacteriophages ORF1 protein family.</text>
</comment>
<protein>
    <recommendedName>
        <fullName>Structural protein</fullName>
    </recommendedName>
    <alternativeName>
        <fullName>ORF1 protein</fullName>
    </alternativeName>
    <alternativeName>
        <fullName>ORF371</fullName>
    </alternativeName>
</protein>
<feature type="chain" id="PRO_0000065931" description="Structural protein">
    <location>
        <begin position="1" status="less than"/>
        <end position="123"/>
    </location>
</feature>
<feature type="non-terminal residue">
    <location>
        <position position="1"/>
    </location>
</feature>
<proteinExistence type="inferred from homology"/>
<dbReference type="EMBL" id="L02497">
    <property type="protein sequence ID" value="AAA56846.1"/>
    <property type="molecule type" value="Genomic_DNA"/>
</dbReference>
<dbReference type="PIR" id="F45691">
    <property type="entry name" value="F45691"/>
</dbReference>
<dbReference type="SMR" id="Q04766"/>
<dbReference type="GO" id="GO:0044423">
    <property type="term" value="C:virion component"/>
    <property type="evidence" value="ECO:0007669"/>
    <property type="project" value="UniProtKB-KW"/>
</dbReference>
<dbReference type="GO" id="GO:0005198">
    <property type="term" value="F:structural molecule activity"/>
    <property type="evidence" value="ECO:0007669"/>
    <property type="project" value="InterPro"/>
</dbReference>
<dbReference type="InterPro" id="IPR009319">
    <property type="entry name" value="Phage_A118_VSP1"/>
</dbReference>
<dbReference type="Pfam" id="PF06152">
    <property type="entry name" value="Phage_min_cap2"/>
    <property type="match status" value="1"/>
</dbReference>
<sequence>DPRFNPKYPTIYDYGYGTPAGTLGINCMHELYPYVEGVTINRQKHYDEQEAIRNGEIQQMQRYYERQVRKWKQRKLAAERIGNTNLEAKCSSAIRRYQSKIRKIVSENDFLTRQYDREKIANI</sequence>
<reference key="1">
    <citation type="journal article" date="1993" name="J. Virol.">
        <title>Molecular comparison of the structural proteins encoding gene clusters of two related Lactobacillus delbrueckii bacteriophages.</title>
        <authorList>
            <person name="Vasala A."/>
            <person name="Dupont L."/>
            <person name="Baumann M."/>
            <person name="Ritzenthaler P."/>
            <person name="Alatossava T."/>
        </authorList>
    </citation>
    <scope>NUCLEOTIDE SEQUENCE [GENOMIC DNA]</scope>
</reference>